<sequence>MKLPQTMLRSISVKHVRWPRILTGSKLWYSTQMAMTPEEKMITDKLQQELEPEVCKVQDVSGGCGSMFAINITSKKFNGLSLIKQHQLVNRILRDDISRWHGLQLTTKKSTGKGPASS</sequence>
<reference key="1">
    <citation type="journal article" date="1995" name="Proc. Natl. Acad. Sci. U.S.A.">
        <title>The nucleotide sequence of chromosome I from Saccharomyces cerevisiae.</title>
        <authorList>
            <person name="Bussey H."/>
            <person name="Kaback D.B."/>
            <person name="Zhong W.-W."/>
            <person name="Vo D.H."/>
            <person name="Clark M.W."/>
            <person name="Fortin N."/>
            <person name="Hall J."/>
            <person name="Ouellette B.F.F."/>
            <person name="Keng T."/>
            <person name="Barton A.B."/>
            <person name="Su Y."/>
            <person name="Davies C.J."/>
            <person name="Storms R.K."/>
        </authorList>
    </citation>
    <scope>NUCLEOTIDE SEQUENCE [LARGE SCALE GENOMIC DNA]</scope>
    <source>
        <strain>ATCC 204508 / S288c</strain>
    </source>
</reference>
<reference key="2">
    <citation type="journal article" date="2014" name="G3 (Bethesda)">
        <title>The reference genome sequence of Saccharomyces cerevisiae: Then and now.</title>
        <authorList>
            <person name="Engel S.R."/>
            <person name="Dietrich F.S."/>
            <person name="Fisk D.G."/>
            <person name="Binkley G."/>
            <person name="Balakrishnan R."/>
            <person name="Costanzo M.C."/>
            <person name="Dwight S.S."/>
            <person name="Hitz B.C."/>
            <person name="Karra K."/>
            <person name="Nash R.S."/>
            <person name="Weng S."/>
            <person name="Wong E.D."/>
            <person name="Lloyd P."/>
            <person name="Skrzypek M.S."/>
            <person name="Miyasato S.R."/>
            <person name="Simison M."/>
            <person name="Cherry J.M."/>
        </authorList>
    </citation>
    <scope>GENOME REANNOTATION</scope>
    <source>
        <strain>ATCC 204508 / S288c</strain>
    </source>
</reference>
<reference key="3">
    <citation type="journal article" date="2003" name="Nature">
        <title>Global analysis of protein expression in yeast.</title>
        <authorList>
            <person name="Ghaemmaghami S."/>
            <person name="Huh W.-K."/>
            <person name="Bower K."/>
            <person name="Howson R.W."/>
            <person name="Belle A."/>
            <person name="Dephoure N."/>
            <person name="O'Shea E.K."/>
            <person name="Weissman J.S."/>
        </authorList>
    </citation>
    <scope>LEVEL OF PROTEIN EXPRESSION [LARGE SCALE ANALYSIS]</scope>
</reference>
<reference key="4">
    <citation type="journal article" date="2009" name="PLoS Genet.">
        <title>Computationally driven, quantitative experiments discover genes required for mitochondrial biogenesis.</title>
        <authorList>
            <person name="Hess D.C."/>
            <person name="Myers C.L."/>
            <person name="Huttenhower C."/>
            <person name="Hibbs M.A."/>
            <person name="Hayes A.P."/>
            <person name="Paw J."/>
            <person name="Clore J.J."/>
            <person name="Mendoza R.M."/>
            <person name="Luis B.S."/>
            <person name="Nislow C."/>
            <person name="Giaever G."/>
            <person name="Costanzo M."/>
            <person name="Troyanskaya O.G."/>
            <person name="Caudy A.A."/>
        </authorList>
    </citation>
    <scope>DISRUPTION PHENOTYPE</scope>
</reference>
<reference key="5">
    <citation type="journal article" date="2016" name="Elife">
        <title>Role of Nfu1 and Bol3 in iron-sulfur cluster transfer to mitochondrial clients.</title>
        <authorList>
            <person name="Melber A."/>
            <person name="Na U."/>
            <person name="Vashisht A."/>
            <person name="Weiler B.D."/>
            <person name="Lill R."/>
            <person name="Wohlschlegel J.A."/>
            <person name="Winge D.R."/>
        </authorList>
    </citation>
    <scope>FUNCTION</scope>
    <scope>SUBCELLULAR LOCATION</scope>
    <scope>DISRUPTION PHENOTYPE</scope>
    <scope>INTERACTION WITH NFU1</scope>
    <scope>MUTAGENESIS OF CYS-64 AND HIS-101</scope>
</reference>
<reference key="6">
    <citation type="journal article" date="2016" name="Elife">
        <title>Mitochondrial Bol1 and Bol3 function as assembly factors for specific iron-sulfur proteins.</title>
        <authorList>
            <person name="Uzarska M.A."/>
            <person name="Nasta V."/>
            <person name="Weiler B.D."/>
            <person name="Spantgar F."/>
            <person name="Ciofi-Baffoni S."/>
            <person name="Saviello M.R."/>
            <person name="Gonnelli L."/>
            <person name="Muehlenhoff U."/>
            <person name="Banci L."/>
            <person name="Lill R."/>
        </authorList>
    </citation>
    <scope>FUNCTION</scope>
    <scope>SUBCELLULAR LOCATION</scope>
    <scope>DISRUPTION PHENOTYPE</scope>
</reference>
<name>BOL3_YEAST</name>
<accession>P39724</accession>
<accession>D6VPH0</accession>
<keyword id="KW-0496">Mitochondrion</keyword>
<keyword id="KW-1185">Reference proteome</keyword>
<comment type="function">
    <text evidence="3 4">Acts as a mitochondrial iron-sulfur (Fe-S) cluster assembly factor that facilitates [4Fe-4S] cluster insertion into a subset of mitochondrial proteins such as lipoyl synthase (LS) and succinate dehydrogenase (SDH) (PubMed:27532772, PubMed:27532773). Required during the last step of iron-sulfur protein assembly when the iron-sulfur cluster is inserted into the target protein (PubMed:27532772). Acts together with NFU1, later than BOL1 and GRX5 in the [4Fe-4S] cluster insertion process (PubMed:27532773). Not required for [2Fe-2S] cluster insertion into mitochondrial proteins (PubMed:27532772).</text>
</comment>
<comment type="subunit">
    <text evidence="4">Interacts with NFU1 (PubMed:27532773).</text>
</comment>
<comment type="subcellular location">
    <subcellularLocation>
        <location evidence="3 8">Mitochondrion matrix</location>
    </subcellularLocation>
</comment>
<comment type="disruption phenotype">
    <text evidence="2 3 4">Increases frequency of mitochondrial genome loss (PubMed:19300474). Cells show a slight decrease of succinate dehydrogenase (SDH) (PubMed:27532772). Cells lacking BOL1 and BOL3 display defects in a subset of mitochondrial [4Fe-4S] enzymes (PubMed:27532772, PubMed:27532773).</text>
</comment>
<comment type="miscellaneous">
    <text evidence="1">Present with 259 molecules/cell in log phase SD medium.</text>
</comment>
<comment type="similarity">
    <text evidence="7">Belongs to the BolA/IbaG family.</text>
</comment>
<dbReference type="EMBL" id="U12980">
    <property type="protein sequence ID" value="AAC04985.1"/>
    <property type="molecule type" value="Genomic_DNA"/>
</dbReference>
<dbReference type="EMBL" id="BK006935">
    <property type="protein sequence ID" value="DAA06940.1"/>
    <property type="molecule type" value="Genomic_DNA"/>
</dbReference>
<dbReference type="PIR" id="S51973">
    <property type="entry name" value="S51973"/>
</dbReference>
<dbReference type="RefSeq" id="NP_009353.1">
    <property type="nucleotide sequence ID" value="NM_001178191.1"/>
</dbReference>
<dbReference type="SMR" id="P39724"/>
<dbReference type="BioGRID" id="31781">
    <property type="interactions" value="112"/>
</dbReference>
<dbReference type="ComplexPortal" id="CPX-6930">
    <property type="entry name" value="BOL3-GRX5 iron-sulfur cluster assembly complex"/>
</dbReference>
<dbReference type="FunCoup" id="P39724">
    <property type="interactions" value="116"/>
</dbReference>
<dbReference type="IntAct" id="P39724">
    <property type="interactions" value="4"/>
</dbReference>
<dbReference type="MINT" id="P39724"/>
<dbReference type="STRING" id="4932.YAL046C"/>
<dbReference type="PaxDb" id="4932-YAL046C"/>
<dbReference type="PeptideAtlas" id="P39724"/>
<dbReference type="EnsemblFungi" id="YAL046C_mRNA">
    <property type="protein sequence ID" value="YAL046C"/>
    <property type="gene ID" value="YAL046C"/>
</dbReference>
<dbReference type="GeneID" id="851251"/>
<dbReference type="KEGG" id="sce:YAL046C"/>
<dbReference type="AGR" id="SGD:S000000044"/>
<dbReference type="SGD" id="S000000044">
    <property type="gene designation" value="BOL3"/>
</dbReference>
<dbReference type="VEuPathDB" id="FungiDB:YAL046C"/>
<dbReference type="eggNOG" id="KOG3348">
    <property type="taxonomic scope" value="Eukaryota"/>
</dbReference>
<dbReference type="GeneTree" id="ENSGT00390000013048"/>
<dbReference type="HOGENOM" id="CLU_109462_0_1_1"/>
<dbReference type="InParanoid" id="P39724"/>
<dbReference type="OMA" id="EIQNMHG"/>
<dbReference type="OrthoDB" id="203381at2759"/>
<dbReference type="BioCyc" id="YEAST:G3O-28853-MONOMER"/>
<dbReference type="BioGRID-ORCS" id="851251">
    <property type="hits" value="9 hits in 10 CRISPR screens"/>
</dbReference>
<dbReference type="PRO" id="PR:P39724"/>
<dbReference type="Proteomes" id="UP000002311">
    <property type="component" value="Chromosome I"/>
</dbReference>
<dbReference type="RNAct" id="P39724">
    <property type="molecule type" value="protein"/>
</dbReference>
<dbReference type="GO" id="GO:1990229">
    <property type="term" value="C:iron-sulfur cluster assembly complex"/>
    <property type="evidence" value="ECO:0000303"/>
    <property type="project" value="ComplexPortal"/>
</dbReference>
<dbReference type="GO" id="GO:0005759">
    <property type="term" value="C:mitochondrial matrix"/>
    <property type="evidence" value="ECO:0000314"/>
    <property type="project" value="SGD"/>
</dbReference>
<dbReference type="GO" id="GO:0005739">
    <property type="term" value="C:mitochondrion"/>
    <property type="evidence" value="ECO:0000303"/>
    <property type="project" value="ComplexPortal"/>
</dbReference>
<dbReference type="GO" id="GO:0006879">
    <property type="term" value="P:intracellular iron ion homeostasis"/>
    <property type="evidence" value="ECO:0000303"/>
    <property type="project" value="ComplexPortal"/>
</dbReference>
<dbReference type="GO" id="GO:0016226">
    <property type="term" value="P:iron-sulfur cluster assembly"/>
    <property type="evidence" value="ECO:0000303"/>
    <property type="project" value="ComplexPortal"/>
</dbReference>
<dbReference type="GO" id="GO:0051604">
    <property type="term" value="P:protein maturation"/>
    <property type="evidence" value="ECO:0000315"/>
    <property type="project" value="SGD"/>
</dbReference>
<dbReference type="Gene3D" id="3.10.20.90">
    <property type="entry name" value="Phosphatidylinositol 3-kinase Catalytic Subunit, Chain A, domain 1"/>
    <property type="match status" value="1"/>
</dbReference>
<dbReference type="InterPro" id="IPR002634">
    <property type="entry name" value="BolA"/>
</dbReference>
<dbReference type="InterPro" id="IPR036065">
    <property type="entry name" value="BolA-like_sf"/>
</dbReference>
<dbReference type="InterPro" id="IPR052275">
    <property type="entry name" value="Mt_Fe-S_assembly_factor"/>
</dbReference>
<dbReference type="PANTHER" id="PTHR46188">
    <property type="entry name" value="BOLA-LIKE PROTEIN 3"/>
    <property type="match status" value="1"/>
</dbReference>
<dbReference type="PANTHER" id="PTHR46188:SF1">
    <property type="entry name" value="BOLA-LIKE PROTEIN 3"/>
    <property type="match status" value="1"/>
</dbReference>
<dbReference type="Pfam" id="PF01722">
    <property type="entry name" value="BolA"/>
    <property type="match status" value="1"/>
</dbReference>
<dbReference type="SUPFAM" id="SSF82657">
    <property type="entry name" value="BolA-like"/>
    <property type="match status" value="1"/>
</dbReference>
<evidence type="ECO:0000269" key="1">
    <source>
    </source>
</evidence>
<evidence type="ECO:0000269" key="2">
    <source>
    </source>
</evidence>
<evidence type="ECO:0000269" key="3">
    <source>
    </source>
</evidence>
<evidence type="ECO:0000269" key="4">
    <source>
    </source>
</evidence>
<evidence type="ECO:0000303" key="5">
    <source>
    </source>
</evidence>
<evidence type="ECO:0000303" key="6">
    <source>
    </source>
</evidence>
<evidence type="ECO:0000305" key="7"/>
<evidence type="ECO:0000305" key="8">
    <source>
    </source>
</evidence>
<gene>
    <name evidence="5 6" type="primary">BOL3</name>
    <name type="synonym">AIM1</name>
    <name type="ordered locus">YAL046C</name>
</gene>
<protein>
    <recommendedName>
        <fullName evidence="7">BolA-like protein 3</fullName>
    </recommendedName>
    <alternativeName>
        <fullName>Altered inheritance of mitochondria protein 1</fullName>
    </alternativeName>
</protein>
<feature type="chain" id="PRO_0000201239" description="BolA-like protein 3">
    <location>
        <begin position="1"/>
        <end position="118"/>
    </location>
</feature>
<feature type="mutagenesis site" description="Partial loss of function." evidence="4">
    <original>C</original>
    <variation>A</variation>
    <location>
        <position position="64"/>
    </location>
</feature>
<feature type="mutagenesis site" description="Loss of function." evidence="4">
    <original>H</original>
    <variation>A</variation>
    <location>
        <position position="101"/>
    </location>
</feature>
<feature type="mutagenesis site" description="Dominant negative mutant; displays respiratory defects that are higher than the BOL1 BOL3 double mutant." evidence="4">
    <original>H</original>
    <variation>C</variation>
    <location>
        <position position="101"/>
    </location>
</feature>
<proteinExistence type="evidence at protein level"/>
<organism>
    <name type="scientific">Saccharomyces cerevisiae (strain ATCC 204508 / S288c)</name>
    <name type="common">Baker's yeast</name>
    <dbReference type="NCBI Taxonomy" id="559292"/>
    <lineage>
        <taxon>Eukaryota</taxon>
        <taxon>Fungi</taxon>
        <taxon>Dikarya</taxon>
        <taxon>Ascomycota</taxon>
        <taxon>Saccharomycotina</taxon>
        <taxon>Saccharomycetes</taxon>
        <taxon>Saccharomycetales</taxon>
        <taxon>Saccharomycetaceae</taxon>
        <taxon>Saccharomyces</taxon>
    </lineage>
</organism>